<protein>
    <recommendedName>
        <fullName evidence="14">Secreted aspartic protease 8</fullName>
        <shortName evidence="15">ACP 8</shortName>
        <shortName evidence="15">Aspartate protease 8</shortName>
        <ecNumber evidence="8 12">3.4.23.24</ecNumber>
    </recommendedName>
    <alternativeName>
        <fullName evidence="15">Candidapepsin-8</fullName>
    </alternativeName>
</protein>
<reference key="1">
    <citation type="journal article" date="1998" name="Microbiology">
        <title>Differential regulation of SAP8 and SAP9, which encode two new members of the secreted aspartic proteinase family in Candida albicans.</title>
        <authorList>
            <person name="Monod M."/>
            <person name="Hube B."/>
            <person name="Hess D."/>
            <person name="Sanglard D."/>
        </authorList>
    </citation>
    <scope>NUCLEOTIDE SEQUENCE [GENOMIC DNA]</scope>
    <scope>INDUCTION</scope>
    <source>
        <strain>C74</strain>
    </source>
</reference>
<reference key="2">
    <citation type="journal article" date="2011" name="J. Biochem.">
        <title>Comprehensive characterization of secreted aspartic proteases encoded by a virulence gene family in Candida albicans.</title>
        <authorList>
            <person name="Aoki W."/>
            <person name="Kitahara N."/>
            <person name="Miura N."/>
            <person name="Morisaka H."/>
            <person name="Yamamoto Y."/>
            <person name="Kuroda K."/>
            <person name="Ueda M."/>
        </authorList>
    </citation>
    <scope>CATALYTIC ACTIVITY</scope>
    <scope>BIOPHYSICOCHEMICAL PROPERTIES</scope>
</reference>
<reference key="3">
    <citation type="journal article" date="2012" name="Mycopathologia">
        <title>In vitro Candida albicans biofilm induced proteinase activity and SAP8 expression correlates with in vivo denture stomatitis severity.</title>
        <authorList>
            <person name="Ramage G."/>
            <person name="Coco B."/>
            <person name="Sherry L."/>
            <person name="Bagg J."/>
            <person name="Lappin D.F."/>
        </authorList>
    </citation>
    <scope>FUNCTION</scope>
    <scope>INDUCTION</scope>
</reference>
<reference key="4">
    <citation type="journal article" date="2012" name="PLoS ONE">
        <title>Secreted aspartic protease cleavage of Candida albicans Msb2 activates Cek1 MAPK signaling affecting biofilm formation and oropharyngeal candidiasis.</title>
        <authorList>
            <person name="Puri S."/>
            <person name="Kumar R."/>
            <person name="Chadha S."/>
            <person name="Tati S."/>
            <person name="Conti H.R."/>
            <person name="Hube B."/>
            <person name="Cullen P.J."/>
            <person name="Edgerton M."/>
        </authorList>
    </citation>
    <scope>FUNCTION</scope>
</reference>
<reference key="5">
    <citation type="journal article" date="2013" name="Peptides">
        <title>Secreted aspartic peptidases of Candida albicans liberate bactericidal hemocidins from human hemoglobin.</title>
        <authorList>
            <person name="Bochenska O."/>
            <person name="Rapala-Kozik M."/>
            <person name="Wolak N."/>
            <person name="Bras G."/>
            <person name="Kozik A."/>
            <person name="Dubin A."/>
            <person name="Aoki W."/>
            <person name="Ueda M."/>
            <person name="Mak P."/>
        </authorList>
    </citation>
    <scope>FUNCTION</scope>
</reference>
<reference key="6">
    <citation type="journal article" date="2016" name="Acta Biochim. Pol.">
        <title>The action of ten secreted aspartic proteases of pathogenic yeast Candida albicans on major human salivary antimicrobial peptide, histatin 5.</title>
        <authorList>
            <person name="Bochenska O."/>
            <person name="Rapala-Kozik M."/>
            <person name="Wolak N."/>
            <person name="Aoki W."/>
            <person name="Ueda M."/>
            <person name="Kozik A."/>
        </authorList>
    </citation>
    <scope>FUNCTION</scope>
    <scope>CATALYTIC ACTIVITY</scope>
    <scope>BIOPHYSICOCHEMICAL PROPERTIES</scope>
</reference>
<dbReference type="EC" id="3.4.23.24" evidence="8 12"/>
<dbReference type="EMBL" id="AF043330">
    <property type="protein sequence ID" value="AAC69995.1"/>
    <property type="molecule type" value="Genomic_DNA"/>
</dbReference>
<dbReference type="SMR" id="O42778"/>
<dbReference type="ChEMBL" id="CHEMBL6050"/>
<dbReference type="MEROPS" id="A01.066"/>
<dbReference type="GlyCosmos" id="O42778">
    <property type="glycosylation" value="1 site, No reported glycans"/>
</dbReference>
<dbReference type="VEuPathDB" id="FungiDB:C3_02510C_A"/>
<dbReference type="VEuPathDB" id="FungiDB:CAWG_02575"/>
<dbReference type="GO" id="GO:0005576">
    <property type="term" value="C:extracellular region"/>
    <property type="evidence" value="ECO:0007669"/>
    <property type="project" value="UniProtKB-SubCell"/>
</dbReference>
<dbReference type="GO" id="GO:0004190">
    <property type="term" value="F:aspartic-type endopeptidase activity"/>
    <property type="evidence" value="ECO:0007669"/>
    <property type="project" value="UniProtKB-KW"/>
</dbReference>
<dbReference type="GO" id="GO:0006508">
    <property type="term" value="P:proteolysis"/>
    <property type="evidence" value="ECO:0007669"/>
    <property type="project" value="UniProtKB-KW"/>
</dbReference>
<dbReference type="CDD" id="cd05474">
    <property type="entry name" value="SAP_like"/>
    <property type="match status" value="1"/>
</dbReference>
<dbReference type="FunFam" id="2.40.70.10:FF:000011">
    <property type="entry name" value="Aspartic protease"/>
    <property type="match status" value="1"/>
</dbReference>
<dbReference type="FunFam" id="2.40.70.10:FF:000023">
    <property type="entry name" value="Aspartic protease"/>
    <property type="match status" value="1"/>
</dbReference>
<dbReference type="Gene3D" id="2.40.70.10">
    <property type="entry name" value="Acid Proteases"/>
    <property type="match status" value="2"/>
</dbReference>
<dbReference type="InterPro" id="IPR001461">
    <property type="entry name" value="Aspartic_peptidase_A1"/>
</dbReference>
<dbReference type="InterPro" id="IPR001969">
    <property type="entry name" value="Aspartic_peptidase_AS"/>
</dbReference>
<dbReference type="InterPro" id="IPR033121">
    <property type="entry name" value="PEPTIDASE_A1"/>
</dbReference>
<dbReference type="InterPro" id="IPR021109">
    <property type="entry name" value="Peptidase_aspartic_dom_sf"/>
</dbReference>
<dbReference type="InterPro" id="IPR033876">
    <property type="entry name" value="SAP-like"/>
</dbReference>
<dbReference type="PANTHER" id="PTHR47966:SF65">
    <property type="entry name" value="ASPARTIC-TYPE ENDOPEPTIDASE"/>
    <property type="match status" value="1"/>
</dbReference>
<dbReference type="PANTHER" id="PTHR47966">
    <property type="entry name" value="BETA-SITE APP-CLEAVING ENZYME, ISOFORM A-RELATED"/>
    <property type="match status" value="1"/>
</dbReference>
<dbReference type="Pfam" id="PF00026">
    <property type="entry name" value="Asp"/>
    <property type="match status" value="1"/>
</dbReference>
<dbReference type="PRINTS" id="PR00792">
    <property type="entry name" value="PEPSIN"/>
</dbReference>
<dbReference type="SUPFAM" id="SSF50630">
    <property type="entry name" value="Acid proteases"/>
    <property type="match status" value="1"/>
</dbReference>
<dbReference type="PROSITE" id="PS00141">
    <property type="entry name" value="ASP_PROTEASE"/>
    <property type="match status" value="1"/>
</dbReference>
<dbReference type="PROSITE" id="PS51767">
    <property type="entry name" value="PEPTIDASE_A1"/>
    <property type="match status" value="1"/>
</dbReference>
<keyword id="KW-0064">Aspartyl protease</keyword>
<keyword id="KW-1015">Disulfide bond</keyword>
<keyword id="KW-0325">Glycoprotein</keyword>
<keyword id="KW-0378">Hydrolase</keyword>
<keyword id="KW-0645">Protease</keyword>
<keyword id="KW-0964">Secreted</keyword>
<keyword id="KW-0732">Signal</keyword>
<keyword id="KW-0843">Virulence</keyword>
<keyword id="KW-0865">Zymogen</keyword>
<proteinExistence type="evidence at protein level"/>
<accession>O42778</accession>
<name>CARP8_CANAX</name>
<feature type="signal peptide" evidence="4">
    <location>
        <begin position="1"/>
        <end position="25"/>
    </location>
</feature>
<feature type="propeptide" id="PRO_0000025862" description="Activation peptide" evidence="4">
    <location>
        <begin position="26"/>
        <end status="unknown"/>
    </location>
</feature>
<feature type="chain" id="PRO_0000025863" description="Secreted aspartic protease 8">
    <location>
        <begin status="unknown"/>
        <end position="405"/>
    </location>
</feature>
<feature type="domain" description="Peptidase A1" evidence="5">
    <location>
        <begin position="89"/>
        <end position="392"/>
    </location>
</feature>
<feature type="region of interest" description="Disordered" evidence="7">
    <location>
        <begin position="52"/>
        <end position="78"/>
    </location>
</feature>
<feature type="compositionally biased region" description="Low complexity" evidence="7">
    <location>
        <begin position="58"/>
        <end position="70"/>
    </location>
</feature>
<feature type="active site" evidence="6">
    <location>
        <position position="107"/>
    </location>
</feature>
<feature type="active site" evidence="6">
    <location>
        <position position="292"/>
    </location>
</feature>
<feature type="binding site" evidence="3">
    <location>
        <begin position="107"/>
        <end position="109"/>
    </location>
    <ligand>
        <name>pepstatin A</name>
        <dbReference type="ChEBI" id="CHEBI:190525"/>
        <note>inhibitor</note>
    </ligand>
</feature>
<feature type="binding site" evidence="3">
    <location>
        <begin position="292"/>
        <end position="296"/>
    </location>
    <ligand>
        <name>pepstatin A</name>
        <dbReference type="ChEBI" id="CHEBI:190525"/>
        <note>inhibitor</note>
    </ligand>
</feature>
<feature type="glycosylation site" description="N-linked (GlcNAc...) asparagine" evidence="4">
    <location>
        <position position="50"/>
    </location>
</feature>
<feature type="disulfide bond" evidence="2">
    <location>
        <begin position="122"/>
        <end position="134"/>
    </location>
</feature>
<feature type="disulfide bond" evidence="2">
    <location>
        <begin position="327"/>
        <end position="358"/>
    </location>
</feature>
<comment type="function">
    <text evidence="9 10 11">Secreted aspartic peptidases (SAPs) are a group of ten acidic hydrolases considered as key virulence factors (PubMed:22302440, PubMed:23139737). These enzymes supply the fungus with nutrient amino acids as well as are able to degrade the selected host's proteins involved in the immune defense (PubMed:22302440, PubMed:23139737). Moreover, acts toward human hemoglobin though limited proteolysis to generate a variety of antimicrobial hemocidins, enabling to compete with the other microorganisms of the same physiological niche using the microbicidal peptides generated from the host protein (PubMed:23927842).</text>
</comment>
<comment type="function">
    <text evidence="12">Plays a key role in defense against host by cleaving histatin-5 (Hst 5), a peptide from human saliva that carries out fungicidal activity (PubMed:27390786). The cleavage rate decreases in an order of SAP2 &gt; SAP9 &gt; SAP3 &gt; SAP7 &gt; SAP4 &gt; SAP1 &gt; SAP8 (PubMed:27390786). The hydrolysis of Hst 5 by SAP8 causes production of the DSHAKRHHGY, HHSHRGY and FHEKHHSHRGY peptides (PubMed:27390786).</text>
</comment>
<comment type="catalytic activity">
    <reaction evidence="8 12">
        <text>Preferential cleavage at the carboxyl of hydrophobic amino acids, but fails to cleave 15-Leu-|-Tyr-16, 16-Tyr-|-Leu-17 and 24-Phe-|-Phe-25 of insulin B chain. Activates trypsinogen, and degrades keratin.</text>
        <dbReference type="EC" id="3.4.23.24"/>
    </reaction>
</comment>
<comment type="biophysicochemical properties">
    <phDependence>
        <text evidence="8 12">Optimum pH is 2.5 using casein-resorufin as substrate, and 6.0-7.0, the pH of the saliva, for cleavage of Hst 5.</text>
    </phDependence>
</comment>
<comment type="subunit">
    <text evidence="1">Monomer.</text>
</comment>
<comment type="subcellular location">
    <subcellularLocation>
        <location evidence="2">Secreted</location>
    </subcellularLocation>
</comment>
<comment type="induction">
    <text evidence="9 13">Expressed in greater amounts in the mature biofilms compared to early biofilms during inflammatory disorder of the palatal mucosa among denture wearers.</text>
</comment>
<comment type="similarity">
    <text evidence="15">Belongs to the peptidase A1 family.</text>
</comment>
<evidence type="ECO:0000250" key="1">
    <source>
        <dbReference type="UniProtKB" id="P0CS83"/>
    </source>
</evidence>
<evidence type="ECO:0000250" key="2">
    <source>
        <dbReference type="UniProtKB" id="P0CY27"/>
    </source>
</evidence>
<evidence type="ECO:0000250" key="3">
    <source>
        <dbReference type="UniProtKB" id="P0CY29"/>
    </source>
</evidence>
<evidence type="ECO:0000255" key="4"/>
<evidence type="ECO:0000255" key="5">
    <source>
        <dbReference type="PROSITE-ProRule" id="PRU01103"/>
    </source>
</evidence>
<evidence type="ECO:0000255" key="6">
    <source>
        <dbReference type="PROSITE-ProRule" id="PRU10094"/>
    </source>
</evidence>
<evidence type="ECO:0000256" key="7">
    <source>
        <dbReference type="SAM" id="MobiDB-lite"/>
    </source>
</evidence>
<evidence type="ECO:0000269" key="8">
    <source>
    </source>
</evidence>
<evidence type="ECO:0000269" key="9">
    <source>
    </source>
</evidence>
<evidence type="ECO:0000269" key="10">
    <source>
    </source>
</evidence>
<evidence type="ECO:0000269" key="11">
    <source>
    </source>
</evidence>
<evidence type="ECO:0000269" key="12">
    <source>
    </source>
</evidence>
<evidence type="ECO:0000269" key="13">
    <source>
    </source>
</evidence>
<evidence type="ECO:0000303" key="14">
    <source>
    </source>
</evidence>
<evidence type="ECO:0000305" key="15"/>
<sequence length="405" mass="43051">MVSIITFTKNVLVTLAFALLAQGLAIPEDIDKRAEKVVSLDFTVTRKPFNATAHGQHHQSQQQQQQQQQQPAQKRGTVQTSLINEGPSYAATITVGSNKQQQTVIVDTGSSDLWVVDSAAVCQVTYPGQSPTFCKQDGTYKPSSSTTSQNLGKAFSIRYEDGSSSQGTVYKDTIGLGGASITNQQFADVTTTSVDQGILGIGFTGDESSPTYDNVPVTLKKQGIINKNAYSLYLNSASASSGTIIFGGVDNAKYTGSLTALPITSSNELRVQLSTINIAGTTVSASTTPVLDSGTTLTYFSQTIADKLAAAVGAKWNSYYQLYTSSCNLAGNIVFNFAKGVTISVPLSEFVLQDGNSCYFGVSRDSATILGDNFLRRAYAVYDLDGNTISLAQVKYTTSSSISTL</sequence>
<organism>
    <name type="scientific">Candida albicans</name>
    <name type="common">Yeast</name>
    <dbReference type="NCBI Taxonomy" id="5476"/>
    <lineage>
        <taxon>Eukaryota</taxon>
        <taxon>Fungi</taxon>
        <taxon>Dikarya</taxon>
        <taxon>Ascomycota</taxon>
        <taxon>Saccharomycotina</taxon>
        <taxon>Pichiomycetes</taxon>
        <taxon>Debaryomycetaceae</taxon>
        <taxon>Candida/Lodderomyces clade</taxon>
        <taxon>Candida</taxon>
    </lineage>
</organism>
<gene>
    <name evidence="14" type="primary">SAP8</name>
</gene>